<organism>
    <name type="scientific">Vibrio cholerae serotype O1 (strain ATCC 39315 / El Tor Inaba N16961)</name>
    <dbReference type="NCBI Taxonomy" id="243277"/>
    <lineage>
        <taxon>Bacteria</taxon>
        <taxon>Pseudomonadati</taxon>
        <taxon>Pseudomonadota</taxon>
        <taxon>Gammaproteobacteria</taxon>
        <taxon>Vibrionales</taxon>
        <taxon>Vibrionaceae</taxon>
        <taxon>Vibrio</taxon>
    </lineage>
</organism>
<keyword id="KW-0002">3D-structure</keyword>
<keyword id="KW-0028">Amino-acid biosynthesis</keyword>
<keyword id="KW-0210">Decarboxylase</keyword>
<keyword id="KW-0456">Lyase</keyword>
<keyword id="KW-0457">Lysine biosynthesis</keyword>
<keyword id="KW-0663">Pyridoxal phosphate</keyword>
<keyword id="KW-1185">Reference proteome</keyword>
<sequence length="417" mass="46277">MDYFNYQEDGQLWAEQVPLADLANQYGTPLYVYSRATLERHWHAFDKSVGDYPHLICYAVKANSNLGVLNTLARLGSGFDIVSVGELERVLAAGGDPSKVVFSGVGKTEAEMKRALQLKIKCFNVESEPELQRLNKVAGELGVKAPISLRINPDVDAKTHPYISTGLRDNKFGITFDRAAQVYRLAHSLPNLDVHGIDCHIGSQLTALAPFIDATDRLLALIDSLKAEGIHIRHLDVGGGLGVVYRDELPPQPSEYAKALLDRLERHRDLELIFEPGRAIAANAGVLVTKVEFLKHTEHKNFAIIDAAMNDLIRPALYQAWQDIIPLRPRQGEAQTYDLVGPVCETSDFLGKDRDLVLQEGDLLAVRSSGAYGFTMSSNYNTRPRVAEVMVDGNKTYLVRQREELSSLWALESVLPE</sequence>
<evidence type="ECO:0000250" key="1"/>
<evidence type="ECO:0000255" key="2"/>
<evidence type="ECO:0000305" key="3"/>
<evidence type="ECO:0000305" key="4">
    <source ref="2"/>
</evidence>
<evidence type="ECO:0007829" key="5">
    <source>
        <dbReference type="PDB" id="3N2B"/>
    </source>
</evidence>
<accession>Q9KVL7</accession>
<proteinExistence type="evidence at protein level"/>
<feature type="chain" id="PRO_0000149938" description="Diaminopimelate decarboxylase">
    <location>
        <begin position="1"/>
        <end position="417"/>
    </location>
</feature>
<feature type="active site" description="Proton donor" evidence="2">
    <location>
        <position position="344"/>
    </location>
</feature>
<feature type="binding site" evidence="1">
    <location>
        <position position="240"/>
    </location>
    <ligand>
        <name>pyridoxal 5'-phosphate</name>
        <dbReference type="ChEBI" id="CHEBI:597326"/>
    </ligand>
</feature>
<feature type="binding site" evidence="1">
    <location>
        <begin position="275"/>
        <end position="278"/>
    </location>
    <ligand>
        <name>pyridoxal 5'-phosphate</name>
        <dbReference type="ChEBI" id="CHEBI:597326"/>
    </ligand>
</feature>
<feature type="binding site" evidence="1">
    <location>
        <position position="278"/>
    </location>
    <ligand>
        <name>substrate</name>
    </ligand>
</feature>
<feature type="binding site" evidence="1">
    <location>
        <position position="314"/>
    </location>
    <ligand>
        <name>substrate</name>
    </ligand>
</feature>
<feature type="binding site" evidence="1">
    <location>
        <position position="318"/>
    </location>
    <ligand>
        <name>substrate</name>
    </ligand>
</feature>
<feature type="binding site" evidence="1">
    <location>
        <position position="345"/>
    </location>
    <ligand>
        <name>substrate</name>
    </ligand>
</feature>
<feature type="binding site" evidence="1">
    <location>
        <position position="372"/>
    </location>
    <ligand>
        <name>pyridoxal 5'-phosphate</name>
        <dbReference type="ChEBI" id="CHEBI:597326"/>
    </ligand>
</feature>
<feature type="binding site" evidence="1">
    <location>
        <position position="372"/>
    </location>
    <ligand>
        <name>substrate</name>
    </ligand>
</feature>
<feature type="modified residue" description="N6-(pyridoxal phosphate)lysine" evidence="1">
    <location>
        <position position="61"/>
    </location>
</feature>
<feature type="strand" evidence="5">
    <location>
        <begin position="3"/>
        <end position="6"/>
    </location>
</feature>
<feature type="strand" evidence="5">
    <location>
        <begin position="10"/>
        <end position="14"/>
    </location>
</feature>
<feature type="helix" evidence="5">
    <location>
        <begin position="19"/>
        <end position="26"/>
    </location>
</feature>
<feature type="strand" evidence="5">
    <location>
        <begin position="28"/>
        <end position="34"/>
    </location>
</feature>
<feature type="helix" evidence="5">
    <location>
        <begin position="35"/>
        <end position="48"/>
    </location>
</feature>
<feature type="turn" evidence="5">
    <location>
        <begin position="49"/>
        <end position="51"/>
    </location>
</feature>
<feature type="strand" evidence="5">
    <location>
        <begin position="54"/>
        <end position="59"/>
    </location>
</feature>
<feature type="helix" evidence="5">
    <location>
        <begin position="60"/>
        <end position="62"/>
    </location>
</feature>
<feature type="helix" evidence="5">
    <location>
        <begin position="66"/>
        <end position="74"/>
    </location>
</feature>
<feature type="strand" evidence="5">
    <location>
        <begin position="78"/>
        <end position="83"/>
    </location>
</feature>
<feature type="helix" evidence="5">
    <location>
        <begin position="84"/>
        <end position="92"/>
    </location>
</feature>
<feature type="helix" evidence="5">
    <location>
        <begin position="97"/>
        <end position="99"/>
    </location>
</feature>
<feature type="strand" evidence="5">
    <location>
        <begin position="100"/>
        <end position="102"/>
    </location>
</feature>
<feature type="helix" evidence="5">
    <location>
        <begin position="109"/>
        <end position="117"/>
    </location>
</feature>
<feature type="strand" evidence="5">
    <location>
        <begin position="121"/>
        <end position="125"/>
    </location>
</feature>
<feature type="helix" evidence="5">
    <location>
        <begin position="128"/>
        <end position="141"/>
    </location>
</feature>
<feature type="strand" evidence="5">
    <location>
        <begin position="145"/>
        <end position="151"/>
    </location>
</feature>
<feature type="turn" evidence="5">
    <location>
        <begin position="157"/>
        <end position="159"/>
    </location>
</feature>
<feature type="helix" evidence="5">
    <location>
        <begin position="161"/>
        <end position="168"/>
    </location>
</feature>
<feature type="strand" evidence="5">
    <location>
        <begin position="170"/>
        <end position="174"/>
    </location>
</feature>
<feature type="helix" evidence="5">
    <location>
        <begin position="176"/>
        <end position="178"/>
    </location>
</feature>
<feature type="helix" evidence="5">
    <location>
        <begin position="179"/>
        <end position="188"/>
    </location>
</feature>
<feature type="strand" evidence="5">
    <location>
        <begin position="192"/>
        <end position="198"/>
    </location>
</feature>
<feature type="helix" evidence="5">
    <location>
        <begin position="208"/>
        <end position="227"/>
    </location>
</feature>
<feature type="strand" evidence="5">
    <location>
        <begin position="234"/>
        <end position="236"/>
    </location>
</feature>
<feature type="helix" evidence="5">
    <location>
        <begin position="255"/>
        <end position="264"/>
    </location>
</feature>
<feature type="turn" evidence="5">
    <location>
        <begin position="265"/>
        <end position="267"/>
    </location>
</feature>
<feature type="strand" evidence="5">
    <location>
        <begin position="270"/>
        <end position="274"/>
    </location>
</feature>
<feature type="helix" evidence="5">
    <location>
        <begin position="278"/>
        <end position="281"/>
    </location>
</feature>
<feature type="helix" evidence="5">
    <location>
        <begin position="282"/>
        <end position="284"/>
    </location>
</feature>
<feature type="strand" evidence="5">
    <location>
        <begin position="285"/>
        <end position="296"/>
    </location>
</feature>
<feature type="strand" evidence="5">
    <location>
        <begin position="301"/>
        <end position="306"/>
    </location>
</feature>
<feature type="turn" evidence="5">
    <location>
        <begin position="309"/>
        <end position="311"/>
    </location>
</feature>
<feature type="strand" evidence="5">
    <location>
        <begin position="324"/>
        <end position="328"/>
    </location>
</feature>
<feature type="strand" evidence="5">
    <location>
        <begin position="335"/>
        <end position="340"/>
    </location>
</feature>
<feature type="strand" evidence="5">
    <location>
        <begin position="342"/>
        <end position="345"/>
    </location>
</feature>
<feature type="strand" evidence="5">
    <location>
        <begin position="349"/>
        <end position="356"/>
    </location>
</feature>
<feature type="strand" evidence="5">
    <location>
        <begin position="363"/>
        <end position="368"/>
    </location>
</feature>
<feature type="strand" evidence="5">
    <location>
        <begin position="370"/>
        <end position="373"/>
    </location>
</feature>
<feature type="helix" evidence="5">
    <location>
        <begin position="374"/>
        <end position="376"/>
    </location>
</feature>
<feature type="turn" evidence="5">
    <location>
        <begin position="380"/>
        <end position="382"/>
    </location>
</feature>
<feature type="strand" evidence="5">
    <location>
        <begin position="387"/>
        <end position="392"/>
    </location>
</feature>
<feature type="strand" evidence="5">
    <location>
        <begin position="395"/>
        <end position="400"/>
    </location>
</feature>
<feature type="helix" evidence="5">
    <location>
        <begin position="405"/>
        <end position="409"/>
    </location>
</feature>
<protein>
    <recommendedName>
        <fullName>Diaminopimelate decarboxylase</fullName>
        <shortName>DAP decarboxylase</shortName>
        <shortName>DAPDC</shortName>
        <ecNumber>4.1.1.20</ecNumber>
    </recommendedName>
</protein>
<reference key="1">
    <citation type="journal article" date="2000" name="Nature">
        <title>DNA sequence of both chromosomes of the cholera pathogen Vibrio cholerae.</title>
        <authorList>
            <person name="Heidelberg J.F."/>
            <person name="Eisen J.A."/>
            <person name="Nelson W.C."/>
            <person name="Clayton R.A."/>
            <person name="Gwinn M.L."/>
            <person name="Dodson R.J."/>
            <person name="Haft D.H."/>
            <person name="Hickey E.K."/>
            <person name="Peterson J.D."/>
            <person name="Umayam L.A."/>
            <person name="Gill S.R."/>
            <person name="Nelson K.E."/>
            <person name="Read T.D."/>
            <person name="Tettelin H."/>
            <person name="Richardson D.L."/>
            <person name="Ermolaeva M.D."/>
            <person name="Vamathevan J.J."/>
            <person name="Bass S."/>
            <person name="Qin H."/>
            <person name="Dragoi I."/>
            <person name="Sellers P."/>
            <person name="McDonald L.A."/>
            <person name="Utterback T.R."/>
            <person name="Fleischmann R.D."/>
            <person name="Nierman W.C."/>
            <person name="White O."/>
            <person name="Salzberg S.L."/>
            <person name="Smith H.O."/>
            <person name="Colwell R.R."/>
            <person name="Mekalanos J.J."/>
            <person name="Venter J.C."/>
            <person name="Fraser C.M."/>
        </authorList>
    </citation>
    <scope>NUCLEOTIDE SEQUENCE [LARGE SCALE GENOMIC DNA]</scope>
    <source>
        <strain>ATCC 39315 / El Tor Inaba N16961</strain>
    </source>
</reference>
<reference key="2">
    <citation type="submission" date="2010-06" db="PDB data bank">
        <title>1.8 Angstrom resolution crystal structure of diaminopimelate decarboxylase (lysA) from Vibrio cholerae.</title>
        <authorList>
            <consortium name="Center for Structural Genomics of Infectious Diseases (CSGID)"/>
        </authorList>
    </citation>
    <scope>X-RAY CRYSTALLOGRAPHY (1.80 ANGSTROMS)</scope>
    <scope>SUBUNIT</scope>
</reference>
<comment type="function">
    <text evidence="1">Specifically catalyzes the decarboxylation of meso-diaminopimelate (meso-DAP) to L-lysine.</text>
</comment>
<comment type="catalytic activity">
    <reaction>
        <text>meso-2,6-diaminopimelate + H(+) = L-lysine + CO2</text>
        <dbReference type="Rhea" id="RHEA:15101"/>
        <dbReference type="ChEBI" id="CHEBI:15378"/>
        <dbReference type="ChEBI" id="CHEBI:16526"/>
        <dbReference type="ChEBI" id="CHEBI:32551"/>
        <dbReference type="ChEBI" id="CHEBI:57791"/>
        <dbReference type="EC" id="4.1.1.20"/>
    </reaction>
</comment>
<comment type="cofactor">
    <cofactor evidence="1">
        <name>pyridoxal 5'-phosphate</name>
        <dbReference type="ChEBI" id="CHEBI:597326"/>
    </cofactor>
</comment>
<comment type="pathway">
    <text>Amino-acid biosynthesis; L-lysine biosynthesis via DAP pathway; L-lysine from DL-2,6-diaminopimelate: step 1/1.</text>
</comment>
<comment type="subunit">
    <text evidence="4">Homodimer.</text>
</comment>
<comment type="similarity">
    <text evidence="3">Belongs to the Orn/Lys/Arg decarboxylase class-II family. LysA subfamily.</text>
</comment>
<gene>
    <name type="primary">lysA</name>
    <name type="ordered locus">VC_0125</name>
</gene>
<dbReference type="EC" id="4.1.1.20"/>
<dbReference type="EMBL" id="AE003852">
    <property type="protein sequence ID" value="AAF93302.1"/>
    <property type="molecule type" value="Genomic_DNA"/>
</dbReference>
<dbReference type="PIR" id="F82360">
    <property type="entry name" value="F82360"/>
</dbReference>
<dbReference type="RefSeq" id="NP_229783.1">
    <property type="nucleotide sequence ID" value="NC_002505.1"/>
</dbReference>
<dbReference type="RefSeq" id="WP_000384387.1">
    <property type="nucleotide sequence ID" value="NZ_LT906614.1"/>
</dbReference>
<dbReference type="PDB" id="3N2B">
    <property type="method" value="X-ray"/>
    <property type="resolution" value="1.80 A"/>
    <property type="chains" value="A/B/C/D=1-417"/>
</dbReference>
<dbReference type="PDBsum" id="3N2B"/>
<dbReference type="SMR" id="Q9KVL7"/>
<dbReference type="STRING" id="243277.VC_0125"/>
<dbReference type="DNASU" id="2615366"/>
<dbReference type="EnsemblBacteria" id="AAF93302">
    <property type="protein sequence ID" value="AAF93302"/>
    <property type="gene ID" value="VC_0125"/>
</dbReference>
<dbReference type="GeneID" id="89513212"/>
<dbReference type="KEGG" id="vch:VC_0125"/>
<dbReference type="PATRIC" id="fig|243277.26.peg.116"/>
<dbReference type="eggNOG" id="COG0019">
    <property type="taxonomic scope" value="Bacteria"/>
</dbReference>
<dbReference type="HOGENOM" id="CLU_026444_0_0_6"/>
<dbReference type="BRENDA" id="4.1.1.20">
    <property type="organism ID" value="15862"/>
</dbReference>
<dbReference type="UniPathway" id="UPA00034">
    <property type="reaction ID" value="UER00027"/>
</dbReference>
<dbReference type="EvolutionaryTrace" id="Q9KVL7"/>
<dbReference type="Proteomes" id="UP000000584">
    <property type="component" value="Chromosome 1"/>
</dbReference>
<dbReference type="GO" id="GO:0008836">
    <property type="term" value="F:diaminopimelate decarboxylase activity"/>
    <property type="evidence" value="ECO:0000318"/>
    <property type="project" value="GO_Central"/>
</dbReference>
<dbReference type="GO" id="GO:0030170">
    <property type="term" value="F:pyridoxal phosphate binding"/>
    <property type="evidence" value="ECO:0007669"/>
    <property type="project" value="UniProtKB-UniRule"/>
</dbReference>
<dbReference type="GO" id="GO:0009089">
    <property type="term" value="P:lysine biosynthetic process via diaminopimelate"/>
    <property type="evidence" value="ECO:0000318"/>
    <property type="project" value="GO_Central"/>
</dbReference>
<dbReference type="CDD" id="cd06828">
    <property type="entry name" value="PLPDE_III_DapDC"/>
    <property type="match status" value="1"/>
</dbReference>
<dbReference type="FunFam" id="2.40.37.10:FF:000003">
    <property type="entry name" value="Diaminopimelate decarboxylase"/>
    <property type="match status" value="1"/>
</dbReference>
<dbReference type="FunFam" id="3.20.20.10:FF:000003">
    <property type="entry name" value="Diaminopimelate decarboxylase"/>
    <property type="match status" value="1"/>
</dbReference>
<dbReference type="Gene3D" id="3.20.20.10">
    <property type="entry name" value="Alanine racemase"/>
    <property type="match status" value="1"/>
</dbReference>
<dbReference type="Gene3D" id="2.40.37.10">
    <property type="entry name" value="Lyase, Ornithine Decarboxylase, Chain A, domain 1"/>
    <property type="match status" value="1"/>
</dbReference>
<dbReference type="HAMAP" id="MF_02120">
    <property type="entry name" value="LysA"/>
    <property type="match status" value="1"/>
</dbReference>
<dbReference type="InterPro" id="IPR009006">
    <property type="entry name" value="Ala_racemase/Decarboxylase_C"/>
</dbReference>
<dbReference type="InterPro" id="IPR002986">
    <property type="entry name" value="DAP_deCOOHase_LysA"/>
</dbReference>
<dbReference type="InterPro" id="IPR022643">
    <property type="entry name" value="De-COase2_C"/>
</dbReference>
<dbReference type="InterPro" id="IPR022657">
    <property type="entry name" value="De-COase2_CS"/>
</dbReference>
<dbReference type="InterPro" id="IPR022644">
    <property type="entry name" value="De-COase2_N"/>
</dbReference>
<dbReference type="InterPro" id="IPR022653">
    <property type="entry name" value="De-COase2_pyr-phos_BS"/>
</dbReference>
<dbReference type="InterPro" id="IPR000183">
    <property type="entry name" value="Orn/DAP/Arg_de-COase"/>
</dbReference>
<dbReference type="InterPro" id="IPR029066">
    <property type="entry name" value="PLP-binding_barrel"/>
</dbReference>
<dbReference type="NCBIfam" id="TIGR01048">
    <property type="entry name" value="lysA"/>
    <property type="match status" value="1"/>
</dbReference>
<dbReference type="PANTHER" id="PTHR43727">
    <property type="entry name" value="DIAMINOPIMELATE DECARBOXYLASE"/>
    <property type="match status" value="1"/>
</dbReference>
<dbReference type="PANTHER" id="PTHR43727:SF2">
    <property type="entry name" value="GROUP IV DECARBOXYLASE"/>
    <property type="match status" value="1"/>
</dbReference>
<dbReference type="Pfam" id="PF02784">
    <property type="entry name" value="Orn_Arg_deC_N"/>
    <property type="match status" value="1"/>
</dbReference>
<dbReference type="Pfam" id="PF00278">
    <property type="entry name" value="Orn_DAP_Arg_deC"/>
    <property type="match status" value="1"/>
</dbReference>
<dbReference type="PRINTS" id="PR01181">
    <property type="entry name" value="DAPDCRBXLASE"/>
</dbReference>
<dbReference type="PRINTS" id="PR01179">
    <property type="entry name" value="ODADCRBXLASE"/>
</dbReference>
<dbReference type="SUPFAM" id="SSF50621">
    <property type="entry name" value="Alanine racemase C-terminal domain-like"/>
    <property type="match status" value="1"/>
</dbReference>
<dbReference type="SUPFAM" id="SSF51419">
    <property type="entry name" value="PLP-binding barrel"/>
    <property type="match status" value="1"/>
</dbReference>
<dbReference type="PROSITE" id="PS00878">
    <property type="entry name" value="ODR_DC_2_1"/>
    <property type="match status" value="1"/>
</dbReference>
<dbReference type="PROSITE" id="PS00879">
    <property type="entry name" value="ODR_DC_2_2"/>
    <property type="match status" value="1"/>
</dbReference>
<name>DCDA_VIBCH</name>